<gene>
    <name evidence="1" type="primary">truB</name>
    <name type="ordered locus">GK1266</name>
</gene>
<evidence type="ECO:0000255" key="1">
    <source>
        <dbReference type="HAMAP-Rule" id="MF_01080"/>
    </source>
</evidence>
<reference key="1">
    <citation type="journal article" date="2004" name="Nucleic Acids Res.">
        <title>Thermoadaptation trait revealed by the genome sequence of thermophilic Geobacillus kaustophilus.</title>
        <authorList>
            <person name="Takami H."/>
            <person name="Takaki Y."/>
            <person name="Chee G.-J."/>
            <person name="Nishi S."/>
            <person name="Shimamura S."/>
            <person name="Suzuki H."/>
            <person name="Matsui S."/>
            <person name="Uchiyama I."/>
        </authorList>
    </citation>
    <scope>NUCLEOTIDE SEQUENCE [LARGE SCALE GENOMIC DNA]</scope>
    <source>
        <strain>HTA426</strain>
    </source>
</reference>
<dbReference type="EC" id="5.4.99.25" evidence="1"/>
<dbReference type="EMBL" id="BA000043">
    <property type="protein sequence ID" value="BAD75551.1"/>
    <property type="molecule type" value="Genomic_DNA"/>
</dbReference>
<dbReference type="SMR" id="Q5L0I5"/>
<dbReference type="STRING" id="235909.GK1266"/>
<dbReference type="KEGG" id="gka:GK1266"/>
<dbReference type="PATRIC" id="fig|235909.7.peg.1367"/>
<dbReference type="eggNOG" id="COG0130">
    <property type="taxonomic scope" value="Bacteria"/>
</dbReference>
<dbReference type="HOGENOM" id="CLU_032087_0_1_9"/>
<dbReference type="Proteomes" id="UP000001172">
    <property type="component" value="Chromosome"/>
</dbReference>
<dbReference type="GO" id="GO:0003723">
    <property type="term" value="F:RNA binding"/>
    <property type="evidence" value="ECO:0007669"/>
    <property type="project" value="InterPro"/>
</dbReference>
<dbReference type="GO" id="GO:0160148">
    <property type="term" value="F:tRNA pseudouridine(55) synthase activity"/>
    <property type="evidence" value="ECO:0007669"/>
    <property type="project" value="UniProtKB-EC"/>
</dbReference>
<dbReference type="GO" id="GO:1990481">
    <property type="term" value="P:mRNA pseudouridine synthesis"/>
    <property type="evidence" value="ECO:0007669"/>
    <property type="project" value="TreeGrafter"/>
</dbReference>
<dbReference type="GO" id="GO:0031119">
    <property type="term" value="P:tRNA pseudouridine synthesis"/>
    <property type="evidence" value="ECO:0007669"/>
    <property type="project" value="UniProtKB-UniRule"/>
</dbReference>
<dbReference type="CDD" id="cd02573">
    <property type="entry name" value="PseudoU_synth_EcTruB"/>
    <property type="match status" value="1"/>
</dbReference>
<dbReference type="FunFam" id="3.30.2350.10:FF:000011">
    <property type="entry name" value="tRNA pseudouridine synthase B"/>
    <property type="match status" value="1"/>
</dbReference>
<dbReference type="Gene3D" id="3.30.2350.10">
    <property type="entry name" value="Pseudouridine synthase"/>
    <property type="match status" value="1"/>
</dbReference>
<dbReference type="HAMAP" id="MF_01080">
    <property type="entry name" value="TruB_bact"/>
    <property type="match status" value="1"/>
</dbReference>
<dbReference type="InterPro" id="IPR020103">
    <property type="entry name" value="PsdUridine_synth_cat_dom_sf"/>
</dbReference>
<dbReference type="InterPro" id="IPR002501">
    <property type="entry name" value="PsdUridine_synth_N"/>
</dbReference>
<dbReference type="InterPro" id="IPR014780">
    <property type="entry name" value="tRNA_psdUridine_synth_TruB"/>
</dbReference>
<dbReference type="InterPro" id="IPR032819">
    <property type="entry name" value="TruB_C"/>
</dbReference>
<dbReference type="NCBIfam" id="TIGR00431">
    <property type="entry name" value="TruB"/>
    <property type="match status" value="1"/>
</dbReference>
<dbReference type="PANTHER" id="PTHR13767:SF2">
    <property type="entry name" value="PSEUDOURIDYLATE SYNTHASE TRUB1"/>
    <property type="match status" value="1"/>
</dbReference>
<dbReference type="PANTHER" id="PTHR13767">
    <property type="entry name" value="TRNA-PSEUDOURIDINE SYNTHASE"/>
    <property type="match status" value="1"/>
</dbReference>
<dbReference type="Pfam" id="PF16198">
    <property type="entry name" value="TruB_C_2"/>
    <property type="match status" value="1"/>
</dbReference>
<dbReference type="Pfam" id="PF01509">
    <property type="entry name" value="TruB_N"/>
    <property type="match status" value="1"/>
</dbReference>
<dbReference type="SUPFAM" id="SSF55120">
    <property type="entry name" value="Pseudouridine synthase"/>
    <property type="match status" value="1"/>
</dbReference>
<name>TRUB_GEOKA</name>
<sequence length="285" mass="31436">MDGVLLLNKPKGMTSHDCVAKVRRLLGVKKAGHTGTLDPNVSGVLPICLGKATRIAEFLTGTTKTYEGKVTLGAATTTEDADGDIIAARPVDRPIARAEIEAVFDSLTGEIEQTPPMYSAVKVGGKKLYEYARAGIEVERPTRRVTIYELELLDEREQFFGETVSFRFRVTCSKGTYVRTLAVMIGERLGYPAHMSDLIRTASGPFRLEDCVTFEDVERRAADGTADALLIPIERALFHLPKYEINDKVAEKVKNGALLRLPAFLEKLTGRSCLFRPSGKRWPCT</sequence>
<comment type="function">
    <text evidence="1">Responsible for synthesis of pseudouridine from uracil-55 in the psi GC loop of transfer RNAs.</text>
</comment>
<comment type="catalytic activity">
    <reaction evidence="1">
        <text>uridine(55) in tRNA = pseudouridine(55) in tRNA</text>
        <dbReference type="Rhea" id="RHEA:42532"/>
        <dbReference type="Rhea" id="RHEA-COMP:10101"/>
        <dbReference type="Rhea" id="RHEA-COMP:10102"/>
        <dbReference type="ChEBI" id="CHEBI:65314"/>
        <dbReference type="ChEBI" id="CHEBI:65315"/>
        <dbReference type="EC" id="5.4.99.25"/>
    </reaction>
</comment>
<comment type="similarity">
    <text evidence="1">Belongs to the pseudouridine synthase TruB family. Type 1 subfamily.</text>
</comment>
<feature type="chain" id="PRO_0000121838" description="tRNA pseudouridine synthase B">
    <location>
        <begin position="1"/>
        <end position="285"/>
    </location>
</feature>
<feature type="active site" description="Nucleophile" evidence="1">
    <location>
        <position position="38"/>
    </location>
</feature>
<keyword id="KW-0413">Isomerase</keyword>
<keyword id="KW-1185">Reference proteome</keyword>
<keyword id="KW-0819">tRNA processing</keyword>
<accession>Q5L0I5</accession>
<proteinExistence type="inferred from homology"/>
<protein>
    <recommendedName>
        <fullName evidence="1">tRNA pseudouridine synthase B</fullName>
        <ecNumber evidence="1">5.4.99.25</ecNumber>
    </recommendedName>
    <alternativeName>
        <fullName evidence="1">tRNA pseudouridine(55) synthase</fullName>
        <shortName evidence="1">Psi55 synthase</shortName>
    </alternativeName>
    <alternativeName>
        <fullName evidence="1">tRNA pseudouridylate synthase</fullName>
    </alternativeName>
    <alternativeName>
        <fullName evidence="1">tRNA-uridine isomerase</fullName>
    </alternativeName>
</protein>
<organism>
    <name type="scientific">Geobacillus kaustophilus (strain HTA426)</name>
    <dbReference type="NCBI Taxonomy" id="235909"/>
    <lineage>
        <taxon>Bacteria</taxon>
        <taxon>Bacillati</taxon>
        <taxon>Bacillota</taxon>
        <taxon>Bacilli</taxon>
        <taxon>Bacillales</taxon>
        <taxon>Anoxybacillaceae</taxon>
        <taxon>Geobacillus</taxon>
        <taxon>Geobacillus thermoleovorans group</taxon>
    </lineage>
</organism>